<reference key="1">
    <citation type="journal article" date="1991" name="Eur. J. Biochem.">
        <title>Primary structure and conformational analysis of peptide methionine-tyrosine, a peptide related to neuropeptide Y and peptide YY isolated from lamprey intestine.</title>
        <authorList>
            <person name="Conlon J.M."/>
            <person name="Bjoernholm B."/>
            <person name="Joergensen F.S."/>
            <person name="Youson J.H."/>
            <person name="Schwartz T.W."/>
        </authorList>
    </citation>
    <scope>PROTEIN SEQUENCE</scope>
    <scope>AMIDATION AT TYR-36</scope>
    <source>
        <tissue>Intestine</tissue>
    </source>
</reference>
<keyword id="KW-0027">Amidation</keyword>
<keyword id="KW-0903">Direct protein sequencing</keyword>
<keyword id="KW-0372">Hormone</keyword>
<keyword id="KW-0964">Secreted</keyword>
<name>PMY_PETMA</name>
<sequence>MPPKPDNPSPDASPEELSKYMLAVRNYINLITRQRY</sequence>
<proteinExistence type="evidence at protein level"/>
<feature type="peptide" id="PRO_0000044822" description="Pancreatic polypeptide MY">
    <location>
        <begin position="1"/>
        <end position="36"/>
    </location>
</feature>
<feature type="modified residue" description="Tyrosine amide" evidence="1">
    <location>
        <position position="36"/>
    </location>
</feature>
<comment type="subcellular location">
    <subcellularLocation>
        <location>Secreted</location>
    </subcellularLocation>
</comment>
<comment type="similarity">
    <text evidence="2">Belongs to the NPY family.</text>
</comment>
<dbReference type="PIR" id="S16943">
    <property type="entry name" value="S16943"/>
</dbReference>
<dbReference type="SMR" id="P80024"/>
<dbReference type="Proteomes" id="UP001318040">
    <property type="component" value="Unplaced"/>
</dbReference>
<dbReference type="GO" id="GO:0005615">
    <property type="term" value="C:extracellular space"/>
    <property type="evidence" value="ECO:0007669"/>
    <property type="project" value="TreeGrafter"/>
</dbReference>
<dbReference type="GO" id="GO:0005184">
    <property type="term" value="F:neuropeptide hormone activity"/>
    <property type="evidence" value="ECO:0007669"/>
    <property type="project" value="TreeGrafter"/>
</dbReference>
<dbReference type="GO" id="GO:0031841">
    <property type="term" value="F:neuropeptide Y receptor binding"/>
    <property type="evidence" value="ECO:0007669"/>
    <property type="project" value="TreeGrafter"/>
</dbReference>
<dbReference type="GO" id="GO:0007631">
    <property type="term" value="P:feeding behavior"/>
    <property type="evidence" value="ECO:0007669"/>
    <property type="project" value="TreeGrafter"/>
</dbReference>
<dbReference type="GO" id="GO:0007218">
    <property type="term" value="P:neuropeptide signaling pathway"/>
    <property type="evidence" value="ECO:0007669"/>
    <property type="project" value="TreeGrafter"/>
</dbReference>
<dbReference type="CDD" id="cd00126">
    <property type="entry name" value="PAH"/>
    <property type="match status" value="1"/>
</dbReference>
<dbReference type="Gene3D" id="6.10.250.900">
    <property type="match status" value="1"/>
</dbReference>
<dbReference type="InterPro" id="IPR001955">
    <property type="entry name" value="Pancreatic_hormone-like"/>
</dbReference>
<dbReference type="InterPro" id="IPR020392">
    <property type="entry name" value="Pancreatic_hormone-like_CS"/>
</dbReference>
<dbReference type="PANTHER" id="PTHR10533">
    <property type="entry name" value="NEUROPEPTIDE Y/PANCREATIC HORMONE/PEPTIDE YY"/>
    <property type="match status" value="1"/>
</dbReference>
<dbReference type="PANTHER" id="PTHR10533:SF14">
    <property type="entry name" value="PEPTIDE YY-RELATED"/>
    <property type="match status" value="1"/>
</dbReference>
<dbReference type="Pfam" id="PF00159">
    <property type="entry name" value="Hormone_3"/>
    <property type="match status" value="1"/>
</dbReference>
<dbReference type="PRINTS" id="PR00278">
    <property type="entry name" value="PANCHORMONE"/>
</dbReference>
<dbReference type="SMART" id="SM00309">
    <property type="entry name" value="PAH"/>
    <property type="match status" value="1"/>
</dbReference>
<dbReference type="PROSITE" id="PS00265">
    <property type="entry name" value="PANCREATIC_HORMONE_1"/>
    <property type="match status" value="1"/>
</dbReference>
<dbReference type="PROSITE" id="PS50276">
    <property type="entry name" value="PANCREATIC_HORMONE_2"/>
    <property type="match status" value="1"/>
</dbReference>
<evidence type="ECO:0000269" key="1">
    <source>
    </source>
</evidence>
<evidence type="ECO:0000305" key="2"/>
<organism>
    <name type="scientific">Petromyzon marinus</name>
    <name type="common">Sea lamprey</name>
    <dbReference type="NCBI Taxonomy" id="7757"/>
    <lineage>
        <taxon>Eukaryota</taxon>
        <taxon>Metazoa</taxon>
        <taxon>Chordata</taxon>
        <taxon>Craniata</taxon>
        <taxon>Vertebrata</taxon>
        <taxon>Cyclostomata</taxon>
        <taxon>Hyperoartia</taxon>
        <taxon>Petromyzontiformes</taxon>
        <taxon>Petromyzontidae</taxon>
        <taxon>Petromyzon</taxon>
    </lineage>
</organism>
<protein>
    <recommendedName>
        <fullName>Pancreatic polypeptide MY</fullName>
        <shortName>PMY</shortName>
    </recommendedName>
</protein>
<accession>P80024</accession>